<proteinExistence type="inferred from homology"/>
<feature type="chain" id="PRO_1000121870" description="Glutamate-1-semialdehyde 2,1-aminomutase">
    <location>
        <begin position="1"/>
        <end position="427"/>
    </location>
</feature>
<feature type="modified residue" description="N6-(pyridoxal phosphate)lysine" evidence="1">
    <location>
        <position position="264"/>
    </location>
</feature>
<protein>
    <recommendedName>
        <fullName evidence="1">Glutamate-1-semialdehyde 2,1-aminomutase</fullName>
        <shortName evidence="1">GSA</shortName>
        <ecNumber evidence="1">5.4.3.8</ecNumber>
    </recommendedName>
    <alternativeName>
        <fullName evidence="1">Glutamate-1-semialdehyde aminotransferase</fullName>
        <shortName evidence="1">GSA-AT</shortName>
    </alternativeName>
</protein>
<reference key="1">
    <citation type="submission" date="2008-05" db="EMBL/GenBank/DDBJ databases">
        <title>Complete genome sequence of Clostridium botulinum E3 str. Alaska E43.</title>
        <authorList>
            <person name="Brinkac L.M."/>
            <person name="Brown J.L."/>
            <person name="Bruce D."/>
            <person name="Detter C."/>
            <person name="Munk C."/>
            <person name="Smith L.A."/>
            <person name="Smith T.J."/>
            <person name="Sutton G."/>
            <person name="Brettin T.S."/>
        </authorList>
    </citation>
    <scope>NUCLEOTIDE SEQUENCE [LARGE SCALE GENOMIC DNA]</scope>
    <source>
        <strain>Alaska E43 / Type E3</strain>
    </source>
</reference>
<evidence type="ECO:0000255" key="1">
    <source>
        <dbReference type="HAMAP-Rule" id="MF_00375"/>
    </source>
</evidence>
<dbReference type="EC" id="5.4.3.8" evidence="1"/>
<dbReference type="EMBL" id="CP001078">
    <property type="protein sequence ID" value="ACD52556.1"/>
    <property type="molecule type" value="Genomic_DNA"/>
</dbReference>
<dbReference type="RefSeq" id="WP_012450677.1">
    <property type="nucleotide sequence ID" value="NC_010723.1"/>
</dbReference>
<dbReference type="SMR" id="B2UX41"/>
<dbReference type="KEGG" id="cbt:CLH_2646"/>
<dbReference type="HOGENOM" id="CLU_016922_1_5_9"/>
<dbReference type="UniPathway" id="UPA00251">
    <property type="reaction ID" value="UER00317"/>
</dbReference>
<dbReference type="GO" id="GO:0005737">
    <property type="term" value="C:cytoplasm"/>
    <property type="evidence" value="ECO:0007669"/>
    <property type="project" value="UniProtKB-SubCell"/>
</dbReference>
<dbReference type="GO" id="GO:0042286">
    <property type="term" value="F:glutamate-1-semialdehyde 2,1-aminomutase activity"/>
    <property type="evidence" value="ECO:0007669"/>
    <property type="project" value="UniProtKB-UniRule"/>
</dbReference>
<dbReference type="GO" id="GO:0030170">
    <property type="term" value="F:pyridoxal phosphate binding"/>
    <property type="evidence" value="ECO:0007669"/>
    <property type="project" value="InterPro"/>
</dbReference>
<dbReference type="GO" id="GO:0008483">
    <property type="term" value="F:transaminase activity"/>
    <property type="evidence" value="ECO:0007669"/>
    <property type="project" value="InterPro"/>
</dbReference>
<dbReference type="GO" id="GO:0006782">
    <property type="term" value="P:protoporphyrinogen IX biosynthetic process"/>
    <property type="evidence" value="ECO:0007669"/>
    <property type="project" value="UniProtKB-UniRule"/>
</dbReference>
<dbReference type="CDD" id="cd00610">
    <property type="entry name" value="OAT_like"/>
    <property type="match status" value="1"/>
</dbReference>
<dbReference type="FunFam" id="3.40.640.10:FF:000021">
    <property type="entry name" value="Glutamate-1-semialdehyde 2,1-aminomutase"/>
    <property type="match status" value="1"/>
</dbReference>
<dbReference type="Gene3D" id="3.90.1150.10">
    <property type="entry name" value="Aspartate Aminotransferase, domain 1"/>
    <property type="match status" value="1"/>
</dbReference>
<dbReference type="Gene3D" id="3.40.640.10">
    <property type="entry name" value="Type I PLP-dependent aspartate aminotransferase-like (Major domain)"/>
    <property type="match status" value="1"/>
</dbReference>
<dbReference type="HAMAP" id="MF_00375">
    <property type="entry name" value="HemL_aminotrans_3"/>
    <property type="match status" value="1"/>
</dbReference>
<dbReference type="InterPro" id="IPR004639">
    <property type="entry name" value="4pyrrol_synth_GluAld_NH2Trfase"/>
</dbReference>
<dbReference type="InterPro" id="IPR005814">
    <property type="entry name" value="Aminotrans_3"/>
</dbReference>
<dbReference type="InterPro" id="IPR049704">
    <property type="entry name" value="Aminotrans_3_PPA_site"/>
</dbReference>
<dbReference type="InterPro" id="IPR015424">
    <property type="entry name" value="PyrdxlP-dep_Trfase"/>
</dbReference>
<dbReference type="InterPro" id="IPR015421">
    <property type="entry name" value="PyrdxlP-dep_Trfase_major"/>
</dbReference>
<dbReference type="InterPro" id="IPR015422">
    <property type="entry name" value="PyrdxlP-dep_Trfase_small"/>
</dbReference>
<dbReference type="NCBIfam" id="TIGR00713">
    <property type="entry name" value="hemL"/>
    <property type="match status" value="1"/>
</dbReference>
<dbReference type="NCBIfam" id="NF000818">
    <property type="entry name" value="PRK00062.1"/>
    <property type="match status" value="1"/>
</dbReference>
<dbReference type="PANTHER" id="PTHR43713">
    <property type="entry name" value="GLUTAMATE-1-SEMIALDEHYDE 2,1-AMINOMUTASE"/>
    <property type="match status" value="1"/>
</dbReference>
<dbReference type="PANTHER" id="PTHR43713:SF3">
    <property type="entry name" value="GLUTAMATE-1-SEMIALDEHYDE 2,1-AMINOMUTASE 1, CHLOROPLASTIC-RELATED"/>
    <property type="match status" value="1"/>
</dbReference>
<dbReference type="Pfam" id="PF00202">
    <property type="entry name" value="Aminotran_3"/>
    <property type="match status" value="1"/>
</dbReference>
<dbReference type="SUPFAM" id="SSF53383">
    <property type="entry name" value="PLP-dependent transferases"/>
    <property type="match status" value="1"/>
</dbReference>
<dbReference type="PROSITE" id="PS00600">
    <property type="entry name" value="AA_TRANSFER_CLASS_3"/>
    <property type="match status" value="1"/>
</dbReference>
<organism>
    <name type="scientific">Clostridium botulinum (strain Alaska E43 / Type E3)</name>
    <dbReference type="NCBI Taxonomy" id="508767"/>
    <lineage>
        <taxon>Bacteria</taxon>
        <taxon>Bacillati</taxon>
        <taxon>Bacillota</taxon>
        <taxon>Clostridia</taxon>
        <taxon>Eubacteriales</taxon>
        <taxon>Clostridiaceae</taxon>
        <taxon>Clostridium</taxon>
    </lineage>
</organism>
<keyword id="KW-0963">Cytoplasm</keyword>
<keyword id="KW-0413">Isomerase</keyword>
<keyword id="KW-0627">Porphyrin biosynthesis</keyword>
<keyword id="KW-0663">Pyridoxal phosphate</keyword>
<sequence length="427" mass="47306">MNNLEIFEESKKYMPGGVNSPVRCFKEMGMNPPVIKSGKGVIIRDEDGKEYIDFVLAWGPLLLGHCDEDVVKAIKETSENALAFGAPTKLELELSKFMCENLDNVEMIRMVNSGTEATMSAVKLARGYTGKSKIVKFAGCYHGHFDGFLIEAGSGVLTEGIPGSLGVPKESVENTLIGLYNDKVQIKELFKKYGNEIAAVIIEPVAGNMGVIKANEDFIKELRDLCDEYGALLIFDEVMTGFRVAFKGAQTLFDIKPDLITYAKIMGGGLPCGAYAGKKEIMEKLSPCGGVYQAGTMSGNPIVMAAGLATLTKLKNNTEFYDNVEKMGKKLQDGLIKISEENNLPLIVNRVGGMLTLFFTELEKVNTYEDVKTCDNERFKRYFKHMLNEGFNIAPSQFEAMFLSVKHTEEHIDKFLDAFKRFAINEK</sequence>
<name>GSA_CLOBA</name>
<gene>
    <name evidence="1" type="primary">hemL</name>
    <name type="ordered locus">CLH_2646</name>
</gene>
<accession>B2UX41</accession>
<comment type="catalytic activity">
    <reaction evidence="1">
        <text>(S)-4-amino-5-oxopentanoate = 5-aminolevulinate</text>
        <dbReference type="Rhea" id="RHEA:14265"/>
        <dbReference type="ChEBI" id="CHEBI:57501"/>
        <dbReference type="ChEBI" id="CHEBI:356416"/>
        <dbReference type="EC" id="5.4.3.8"/>
    </reaction>
</comment>
<comment type="cofactor">
    <cofactor evidence="1">
        <name>pyridoxal 5'-phosphate</name>
        <dbReference type="ChEBI" id="CHEBI:597326"/>
    </cofactor>
</comment>
<comment type="pathway">
    <text evidence="1">Porphyrin-containing compound metabolism; protoporphyrin-IX biosynthesis; 5-aminolevulinate from L-glutamyl-tRNA(Glu): step 2/2.</text>
</comment>
<comment type="subunit">
    <text evidence="1">Homodimer.</text>
</comment>
<comment type="subcellular location">
    <subcellularLocation>
        <location evidence="1">Cytoplasm</location>
    </subcellularLocation>
</comment>
<comment type="similarity">
    <text evidence="1">Belongs to the class-III pyridoxal-phosphate-dependent aminotransferase family. HemL subfamily.</text>
</comment>